<reference key="1">
    <citation type="journal article" date="2002" name="Proc. Natl. Acad. Sci. U.S.A.">
        <title>Complete genome sequence of Clostridium perfringens, an anaerobic flesh-eater.</title>
        <authorList>
            <person name="Shimizu T."/>
            <person name="Ohtani K."/>
            <person name="Hirakawa H."/>
            <person name="Ohshima K."/>
            <person name="Yamashita A."/>
            <person name="Shiba T."/>
            <person name="Ogasawara N."/>
            <person name="Hattori M."/>
            <person name="Kuhara S."/>
            <person name="Hayashi H."/>
        </authorList>
    </citation>
    <scope>NUCLEOTIDE SEQUENCE [LARGE SCALE GENOMIC DNA]</scope>
    <source>
        <strain>13 / Type A</strain>
    </source>
</reference>
<proteinExistence type="inferred from homology"/>
<name>KGUA_CLOPE</name>
<keyword id="KW-0067">ATP-binding</keyword>
<keyword id="KW-0963">Cytoplasm</keyword>
<keyword id="KW-0418">Kinase</keyword>
<keyword id="KW-0547">Nucleotide-binding</keyword>
<keyword id="KW-1185">Reference proteome</keyword>
<keyword id="KW-0808">Transferase</keyword>
<accession>Q8XJK8</accession>
<evidence type="ECO:0000250" key="1"/>
<evidence type="ECO:0000305" key="2"/>
<feature type="chain" id="PRO_0000170525" description="Guanylate kinase">
    <location>
        <begin position="1"/>
        <end position="216"/>
    </location>
</feature>
<feature type="domain" description="Guanylate kinase-like">
    <location>
        <begin position="11"/>
        <end position="189"/>
    </location>
</feature>
<feature type="binding site" evidence="1">
    <location>
        <begin position="18"/>
        <end position="25"/>
    </location>
    <ligand>
        <name>ATP</name>
        <dbReference type="ChEBI" id="CHEBI:30616"/>
    </ligand>
</feature>
<dbReference type="EC" id="2.7.4.8"/>
<dbReference type="EMBL" id="BA000016">
    <property type="protein sequence ID" value="BAB81454.1"/>
    <property type="status" value="ALT_INIT"/>
    <property type="molecule type" value="Genomic_DNA"/>
</dbReference>
<dbReference type="RefSeq" id="WP_003478299.1">
    <property type="nucleotide sequence ID" value="NC_003366.1"/>
</dbReference>
<dbReference type="SMR" id="Q8XJK8"/>
<dbReference type="STRING" id="195102.gene:10491012"/>
<dbReference type="KEGG" id="cpe:CPE1748"/>
<dbReference type="HOGENOM" id="CLU_001715_1_2_9"/>
<dbReference type="Proteomes" id="UP000000818">
    <property type="component" value="Chromosome"/>
</dbReference>
<dbReference type="GO" id="GO:0005829">
    <property type="term" value="C:cytosol"/>
    <property type="evidence" value="ECO:0007669"/>
    <property type="project" value="TreeGrafter"/>
</dbReference>
<dbReference type="GO" id="GO:0005524">
    <property type="term" value="F:ATP binding"/>
    <property type="evidence" value="ECO:0007669"/>
    <property type="project" value="UniProtKB-UniRule"/>
</dbReference>
<dbReference type="GO" id="GO:0004385">
    <property type="term" value="F:guanylate kinase activity"/>
    <property type="evidence" value="ECO:0007669"/>
    <property type="project" value="UniProtKB-UniRule"/>
</dbReference>
<dbReference type="CDD" id="cd00071">
    <property type="entry name" value="GMPK"/>
    <property type="match status" value="1"/>
</dbReference>
<dbReference type="FunFam" id="3.40.50.300:FF:000855">
    <property type="entry name" value="Guanylate kinase"/>
    <property type="match status" value="1"/>
</dbReference>
<dbReference type="FunFam" id="3.30.63.10:FF:000002">
    <property type="entry name" value="Guanylate kinase 1"/>
    <property type="match status" value="1"/>
</dbReference>
<dbReference type="Gene3D" id="3.30.63.10">
    <property type="entry name" value="Guanylate Kinase phosphate binding domain"/>
    <property type="match status" value="1"/>
</dbReference>
<dbReference type="Gene3D" id="3.40.50.300">
    <property type="entry name" value="P-loop containing nucleotide triphosphate hydrolases"/>
    <property type="match status" value="1"/>
</dbReference>
<dbReference type="HAMAP" id="MF_00328">
    <property type="entry name" value="Guanylate_kinase"/>
    <property type="match status" value="1"/>
</dbReference>
<dbReference type="InterPro" id="IPR008145">
    <property type="entry name" value="GK/Ca_channel_bsu"/>
</dbReference>
<dbReference type="InterPro" id="IPR008144">
    <property type="entry name" value="Guanylate_kin-like_dom"/>
</dbReference>
<dbReference type="InterPro" id="IPR017665">
    <property type="entry name" value="Guanylate_kinase"/>
</dbReference>
<dbReference type="InterPro" id="IPR020590">
    <property type="entry name" value="Guanylate_kinase_CS"/>
</dbReference>
<dbReference type="InterPro" id="IPR027417">
    <property type="entry name" value="P-loop_NTPase"/>
</dbReference>
<dbReference type="NCBIfam" id="TIGR03263">
    <property type="entry name" value="guanyl_kin"/>
    <property type="match status" value="1"/>
</dbReference>
<dbReference type="PANTHER" id="PTHR23117:SF13">
    <property type="entry name" value="GUANYLATE KINASE"/>
    <property type="match status" value="1"/>
</dbReference>
<dbReference type="PANTHER" id="PTHR23117">
    <property type="entry name" value="GUANYLATE KINASE-RELATED"/>
    <property type="match status" value="1"/>
</dbReference>
<dbReference type="Pfam" id="PF00625">
    <property type="entry name" value="Guanylate_kin"/>
    <property type="match status" value="1"/>
</dbReference>
<dbReference type="SMART" id="SM00072">
    <property type="entry name" value="GuKc"/>
    <property type="match status" value="1"/>
</dbReference>
<dbReference type="SUPFAM" id="SSF52540">
    <property type="entry name" value="P-loop containing nucleoside triphosphate hydrolases"/>
    <property type="match status" value="1"/>
</dbReference>
<dbReference type="PROSITE" id="PS00856">
    <property type="entry name" value="GUANYLATE_KINASE_1"/>
    <property type="match status" value="1"/>
</dbReference>
<dbReference type="PROSITE" id="PS50052">
    <property type="entry name" value="GUANYLATE_KINASE_2"/>
    <property type="match status" value="1"/>
</dbReference>
<protein>
    <recommendedName>
        <fullName>Guanylate kinase</fullName>
        <ecNumber>2.7.4.8</ecNumber>
    </recommendedName>
    <alternativeName>
        <fullName>GMP kinase</fullName>
    </alternativeName>
</protein>
<sequence length="216" mass="24605">MMNKIHKDNRGVLIVISGPSGAGKGTICKALLEKHDDIFISISATTRNPRVGEVDGVNYHFLTKEEFKQRIAEDDFLEHAEVYGNYYGTPKSSVEKMLDEGKNVILEIDIQGALKVKEKATDGVFIFILPPSMEELKQRIIKRGSETPESLMTRFKSAYKEINYVSKYNYAVVNDNVEDAVKKIEAILLAEKCRVDRLKENLLESKEDEMHEQLYD</sequence>
<gene>
    <name type="primary">gmk</name>
    <name type="ordered locus">CPE1748</name>
</gene>
<comment type="function">
    <text evidence="1">Essential for recycling GMP and indirectly, cGMP.</text>
</comment>
<comment type="catalytic activity">
    <reaction>
        <text>GMP + ATP = GDP + ADP</text>
        <dbReference type="Rhea" id="RHEA:20780"/>
        <dbReference type="ChEBI" id="CHEBI:30616"/>
        <dbReference type="ChEBI" id="CHEBI:58115"/>
        <dbReference type="ChEBI" id="CHEBI:58189"/>
        <dbReference type="ChEBI" id="CHEBI:456216"/>
        <dbReference type="EC" id="2.7.4.8"/>
    </reaction>
</comment>
<comment type="subcellular location">
    <subcellularLocation>
        <location evidence="1">Cytoplasm</location>
    </subcellularLocation>
</comment>
<comment type="similarity">
    <text evidence="2">Belongs to the guanylate kinase family.</text>
</comment>
<comment type="sequence caution" evidence="2">
    <conflict type="erroneous initiation">
        <sequence resource="EMBL-CDS" id="BAB81454"/>
    </conflict>
</comment>
<organism>
    <name type="scientific">Clostridium perfringens (strain 13 / Type A)</name>
    <dbReference type="NCBI Taxonomy" id="195102"/>
    <lineage>
        <taxon>Bacteria</taxon>
        <taxon>Bacillati</taxon>
        <taxon>Bacillota</taxon>
        <taxon>Clostridia</taxon>
        <taxon>Eubacteriales</taxon>
        <taxon>Clostridiaceae</taxon>
        <taxon>Clostridium</taxon>
    </lineage>
</organism>